<sequence length="333" mass="36156">MANIYYDDSCDLNLLKGKTIAVIGYGSQGHAQAQNMKDSGLKVIIGLRDGSKSVKEAKEAGFEVYNVAEASKKADIIQILAPDTIQADMYKADIEPNLSEGKALVFSHGFNIHYDLITPPKNVDVYMVAPKGPGHLVRRVYTEGGGVPCLIAIYQDATGQAKARALAHASGVGGGRAGILETSFREETETDLFGEQAVLCGGVANLIMSGFETLTEAGYDPEIAYFECLHEVKLITDLIYEGGLARMRFSISDTAEYGDYISGPRVIDAGVKARMKDVLTDIQKDKGAAFAKRWMADTKAGYPEYKKLKEKNAAHPIEAVGTKLRSMMKWLAK</sequence>
<feature type="chain" id="PRO_1000124302" description="Ketol-acid reductoisomerase (NADP(+))">
    <location>
        <begin position="1"/>
        <end position="333"/>
    </location>
</feature>
<feature type="domain" description="KARI N-terminal Rossmann" evidence="2">
    <location>
        <begin position="2"/>
        <end position="182"/>
    </location>
</feature>
<feature type="domain" description="KARI C-terminal knotted" evidence="3">
    <location>
        <begin position="183"/>
        <end position="331"/>
    </location>
</feature>
<feature type="active site" evidence="1">
    <location>
        <position position="108"/>
    </location>
</feature>
<feature type="binding site" evidence="1">
    <location>
        <begin position="25"/>
        <end position="28"/>
    </location>
    <ligand>
        <name>NADP(+)</name>
        <dbReference type="ChEBI" id="CHEBI:58349"/>
    </ligand>
</feature>
<feature type="binding site" evidence="1">
    <location>
        <position position="48"/>
    </location>
    <ligand>
        <name>NADP(+)</name>
        <dbReference type="ChEBI" id="CHEBI:58349"/>
    </ligand>
</feature>
<feature type="binding site" evidence="1">
    <location>
        <position position="51"/>
    </location>
    <ligand>
        <name>NADP(+)</name>
        <dbReference type="ChEBI" id="CHEBI:58349"/>
    </ligand>
</feature>
<feature type="binding site" evidence="1">
    <location>
        <position position="53"/>
    </location>
    <ligand>
        <name>NADP(+)</name>
        <dbReference type="ChEBI" id="CHEBI:58349"/>
    </ligand>
</feature>
<feature type="binding site" evidence="1">
    <location>
        <begin position="83"/>
        <end position="86"/>
    </location>
    <ligand>
        <name>NADP(+)</name>
        <dbReference type="ChEBI" id="CHEBI:58349"/>
    </ligand>
</feature>
<feature type="binding site" evidence="1">
    <location>
        <position position="134"/>
    </location>
    <ligand>
        <name>NADP(+)</name>
        <dbReference type="ChEBI" id="CHEBI:58349"/>
    </ligand>
</feature>
<feature type="binding site" evidence="1">
    <location>
        <position position="191"/>
    </location>
    <ligand>
        <name>Mg(2+)</name>
        <dbReference type="ChEBI" id="CHEBI:18420"/>
        <label>1</label>
    </ligand>
</feature>
<feature type="binding site" evidence="1">
    <location>
        <position position="191"/>
    </location>
    <ligand>
        <name>Mg(2+)</name>
        <dbReference type="ChEBI" id="CHEBI:18420"/>
        <label>2</label>
    </ligand>
</feature>
<feature type="binding site" evidence="1">
    <location>
        <position position="195"/>
    </location>
    <ligand>
        <name>Mg(2+)</name>
        <dbReference type="ChEBI" id="CHEBI:18420"/>
        <label>1</label>
    </ligand>
</feature>
<feature type="binding site" evidence="1">
    <location>
        <position position="227"/>
    </location>
    <ligand>
        <name>Mg(2+)</name>
        <dbReference type="ChEBI" id="CHEBI:18420"/>
        <label>2</label>
    </ligand>
</feature>
<feature type="binding site" evidence="1">
    <location>
        <position position="231"/>
    </location>
    <ligand>
        <name>Mg(2+)</name>
        <dbReference type="ChEBI" id="CHEBI:18420"/>
        <label>2</label>
    </ligand>
</feature>
<feature type="binding site" evidence="1">
    <location>
        <position position="252"/>
    </location>
    <ligand>
        <name>substrate</name>
    </ligand>
</feature>
<accession>B0SCQ5</accession>
<evidence type="ECO:0000255" key="1">
    <source>
        <dbReference type="HAMAP-Rule" id="MF_00435"/>
    </source>
</evidence>
<evidence type="ECO:0000255" key="2">
    <source>
        <dbReference type="PROSITE-ProRule" id="PRU01197"/>
    </source>
</evidence>
<evidence type="ECO:0000255" key="3">
    <source>
        <dbReference type="PROSITE-ProRule" id="PRU01198"/>
    </source>
</evidence>
<protein>
    <recommendedName>
        <fullName evidence="1">Ketol-acid reductoisomerase (NADP(+))</fullName>
        <shortName evidence="1">KARI</shortName>
        <ecNumber evidence="1">1.1.1.86</ecNumber>
    </recommendedName>
    <alternativeName>
        <fullName evidence="1">Acetohydroxy-acid isomeroreductase</fullName>
        <shortName evidence="1">AHIR</shortName>
    </alternativeName>
    <alternativeName>
        <fullName evidence="1">Alpha-keto-beta-hydroxylacyl reductoisomerase</fullName>
    </alternativeName>
    <alternativeName>
        <fullName evidence="1">Ketol-acid reductoisomerase type 1</fullName>
    </alternativeName>
    <alternativeName>
        <fullName evidence="1">Ketol-acid reductoisomerase type I</fullName>
    </alternativeName>
</protein>
<name>ILVC_LEPBA</name>
<comment type="function">
    <text evidence="1">Involved in the biosynthesis of branched-chain amino acids (BCAA). Catalyzes an alkyl-migration followed by a ketol-acid reduction of (S)-2-acetolactate (S2AL) to yield (R)-2,3-dihydroxy-isovalerate. In the isomerase reaction, S2AL is rearranged via a Mg-dependent methyl migration to produce 3-hydroxy-3-methyl-2-ketobutyrate (HMKB). In the reductase reaction, this 2-ketoacid undergoes a metal-dependent reduction by NADPH to yield (R)-2,3-dihydroxy-isovalerate.</text>
</comment>
<comment type="catalytic activity">
    <reaction evidence="1">
        <text>(2R)-2,3-dihydroxy-3-methylbutanoate + NADP(+) = (2S)-2-acetolactate + NADPH + H(+)</text>
        <dbReference type="Rhea" id="RHEA:22068"/>
        <dbReference type="ChEBI" id="CHEBI:15378"/>
        <dbReference type="ChEBI" id="CHEBI:49072"/>
        <dbReference type="ChEBI" id="CHEBI:57783"/>
        <dbReference type="ChEBI" id="CHEBI:58349"/>
        <dbReference type="ChEBI" id="CHEBI:58476"/>
        <dbReference type="EC" id="1.1.1.86"/>
    </reaction>
</comment>
<comment type="catalytic activity">
    <reaction evidence="1">
        <text>(2R,3R)-2,3-dihydroxy-3-methylpentanoate + NADP(+) = (S)-2-ethyl-2-hydroxy-3-oxobutanoate + NADPH + H(+)</text>
        <dbReference type="Rhea" id="RHEA:13493"/>
        <dbReference type="ChEBI" id="CHEBI:15378"/>
        <dbReference type="ChEBI" id="CHEBI:49256"/>
        <dbReference type="ChEBI" id="CHEBI:49258"/>
        <dbReference type="ChEBI" id="CHEBI:57783"/>
        <dbReference type="ChEBI" id="CHEBI:58349"/>
        <dbReference type="EC" id="1.1.1.86"/>
    </reaction>
</comment>
<comment type="cofactor">
    <cofactor evidence="1">
        <name>Mg(2+)</name>
        <dbReference type="ChEBI" id="CHEBI:18420"/>
    </cofactor>
    <text evidence="1">Binds 2 magnesium ions per subunit.</text>
</comment>
<comment type="pathway">
    <text evidence="1">Amino-acid biosynthesis; L-isoleucine biosynthesis; L-isoleucine from 2-oxobutanoate: step 2/4.</text>
</comment>
<comment type="pathway">
    <text evidence="1">Amino-acid biosynthesis; L-valine biosynthesis; L-valine from pyruvate: step 2/4.</text>
</comment>
<comment type="similarity">
    <text evidence="1">Belongs to the ketol-acid reductoisomerase family.</text>
</comment>
<reference key="1">
    <citation type="journal article" date="2008" name="PLoS ONE">
        <title>Genome sequence of the saprophyte Leptospira biflexa provides insights into the evolution of Leptospira and the pathogenesis of leptospirosis.</title>
        <authorList>
            <person name="Picardeau M."/>
            <person name="Bulach D.M."/>
            <person name="Bouchier C."/>
            <person name="Zuerner R.L."/>
            <person name="Zidane N."/>
            <person name="Wilson P.J."/>
            <person name="Creno S."/>
            <person name="Kuczek E.S."/>
            <person name="Bommezzadri S."/>
            <person name="Davis J.C."/>
            <person name="McGrath A."/>
            <person name="Johnson M.J."/>
            <person name="Boursaux-Eude C."/>
            <person name="Seemann T."/>
            <person name="Rouy Z."/>
            <person name="Coppel R.L."/>
            <person name="Rood J.I."/>
            <person name="Lajus A."/>
            <person name="Davies J.K."/>
            <person name="Medigue C."/>
            <person name="Adler B."/>
        </authorList>
    </citation>
    <scope>NUCLEOTIDE SEQUENCE [LARGE SCALE GENOMIC DNA]</scope>
    <source>
        <strain>Patoc 1 / Ames</strain>
    </source>
</reference>
<organism>
    <name type="scientific">Leptospira biflexa serovar Patoc (strain Patoc 1 / Ames)</name>
    <dbReference type="NCBI Taxonomy" id="355278"/>
    <lineage>
        <taxon>Bacteria</taxon>
        <taxon>Pseudomonadati</taxon>
        <taxon>Spirochaetota</taxon>
        <taxon>Spirochaetia</taxon>
        <taxon>Leptospirales</taxon>
        <taxon>Leptospiraceae</taxon>
        <taxon>Leptospira</taxon>
    </lineage>
</organism>
<dbReference type="EC" id="1.1.1.86" evidence="1"/>
<dbReference type="EMBL" id="CP000777">
    <property type="protein sequence ID" value="ABZ93217.1"/>
    <property type="molecule type" value="Genomic_DNA"/>
</dbReference>
<dbReference type="RefSeq" id="WP_012387727.1">
    <property type="nucleotide sequence ID" value="NC_010842.1"/>
</dbReference>
<dbReference type="SMR" id="B0SCQ5"/>
<dbReference type="KEGG" id="lbf:LBF_0685"/>
<dbReference type="HOGENOM" id="CLU_033821_0_1_12"/>
<dbReference type="UniPathway" id="UPA00047">
    <property type="reaction ID" value="UER00056"/>
</dbReference>
<dbReference type="UniPathway" id="UPA00049">
    <property type="reaction ID" value="UER00060"/>
</dbReference>
<dbReference type="GO" id="GO:0005829">
    <property type="term" value="C:cytosol"/>
    <property type="evidence" value="ECO:0007669"/>
    <property type="project" value="TreeGrafter"/>
</dbReference>
<dbReference type="GO" id="GO:0004455">
    <property type="term" value="F:ketol-acid reductoisomerase activity"/>
    <property type="evidence" value="ECO:0007669"/>
    <property type="project" value="UniProtKB-UniRule"/>
</dbReference>
<dbReference type="GO" id="GO:0000287">
    <property type="term" value="F:magnesium ion binding"/>
    <property type="evidence" value="ECO:0007669"/>
    <property type="project" value="UniProtKB-UniRule"/>
</dbReference>
<dbReference type="GO" id="GO:0050661">
    <property type="term" value="F:NADP binding"/>
    <property type="evidence" value="ECO:0007669"/>
    <property type="project" value="InterPro"/>
</dbReference>
<dbReference type="GO" id="GO:0009097">
    <property type="term" value="P:isoleucine biosynthetic process"/>
    <property type="evidence" value="ECO:0007669"/>
    <property type="project" value="UniProtKB-UniRule"/>
</dbReference>
<dbReference type="GO" id="GO:0009099">
    <property type="term" value="P:L-valine biosynthetic process"/>
    <property type="evidence" value="ECO:0007669"/>
    <property type="project" value="UniProtKB-UniRule"/>
</dbReference>
<dbReference type="FunFam" id="3.40.50.720:FF:000023">
    <property type="entry name" value="Ketol-acid reductoisomerase (NADP(+))"/>
    <property type="match status" value="1"/>
</dbReference>
<dbReference type="Gene3D" id="6.10.240.10">
    <property type="match status" value="1"/>
</dbReference>
<dbReference type="Gene3D" id="3.40.50.720">
    <property type="entry name" value="NAD(P)-binding Rossmann-like Domain"/>
    <property type="match status" value="1"/>
</dbReference>
<dbReference type="HAMAP" id="MF_00435">
    <property type="entry name" value="IlvC"/>
    <property type="match status" value="1"/>
</dbReference>
<dbReference type="InterPro" id="IPR008927">
    <property type="entry name" value="6-PGluconate_DH-like_C_sf"/>
</dbReference>
<dbReference type="InterPro" id="IPR013023">
    <property type="entry name" value="KARI"/>
</dbReference>
<dbReference type="InterPro" id="IPR000506">
    <property type="entry name" value="KARI_C"/>
</dbReference>
<dbReference type="InterPro" id="IPR013116">
    <property type="entry name" value="KARI_N"/>
</dbReference>
<dbReference type="InterPro" id="IPR014359">
    <property type="entry name" value="KARI_prok"/>
</dbReference>
<dbReference type="InterPro" id="IPR036291">
    <property type="entry name" value="NAD(P)-bd_dom_sf"/>
</dbReference>
<dbReference type="NCBIfam" id="TIGR00465">
    <property type="entry name" value="ilvC"/>
    <property type="match status" value="1"/>
</dbReference>
<dbReference type="NCBIfam" id="NF004017">
    <property type="entry name" value="PRK05479.1"/>
    <property type="match status" value="1"/>
</dbReference>
<dbReference type="NCBIfam" id="NF009940">
    <property type="entry name" value="PRK13403.1"/>
    <property type="match status" value="1"/>
</dbReference>
<dbReference type="PANTHER" id="PTHR21371">
    <property type="entry name" value="KETOL-ACID REDUCTOISOMERASE, MITOCHONDRIAL"/>
    <property type="match status" value="1"/>
</dbReference>
<dbReference type="PANTHER" id="PTHR21371:SF1">
    <property type="entry name" value="KETOL-ACID REDUCTOISOMERASE, MITOCHONDRIAL"/>
    <property type="match status" value="1"/>
</dbReference>
<dbReference type="Pfam" id="PF01450">
    <property type="entry name" value="KARI_C"/>
    <property type="match status" value="1"/>
</dbReference>
<dbReference type="Pfam" id="PF07991">
    <property type="entry name" value="KARI_N"/>
    <property type="match status" value="1"/>
</dbReference>
<dbReference type="PIRSF" id="PIRSF000116">
    <property type="entry name" value="IlvC_gammaproteo"/>
    <property type="match status" value="1"/>
</dbReference>
<dbReference type="SUPFAM" id="SSF48179">
    <property type="entry name" value="6-phosphogluconate dehydrogenase C-terminal domain-like"/>
    <property type="match status" value="1"/>
</dbReference>
<dbReference type="SUPFAM" id="SSF51735">
    <property type="entry name" value="NAD(P)-binding Rossmann-fold domains"/>
    <property type="match status" value="1"/>
</dbReference>
<dbReference type="PROSITE" id="PS51851">
    <property type="entry name" value="KARI_C"/>
    <property type="match status" value="1"/>
</dbReference>
<dbReference type="PROSITE" id="PS51850">
    <property type="entry name" value="KARI_N"/>
    <property type="match status" value="1"/>
</dbReference>
<keyword id="KW-0028">Amino-acid biosynthesis</keyword>
<keyword id="KW-0100">Branched-chain amino acid biosynthesis</keyword>
<keyword id="KW-0460">Magnesium</keyword>
<keyword id="KW-0479">Metal-binding</keyword>
<keyword id="KW-0521">NADP</keyword>
<keyword id="KW-0560">Oxidoreductase</keyword>
<proteinExistence type="inferred from homology"/>
<gene>
    <name evidence="1" type="primary">ilvC</name>
    <name type="ordered locus">LBF_0685</name>
</gene>